<comment type="function">
    <text evidence="1">Cleaves peptides in various proteins in a process that requires ATP hydrolysis. Has a chymotrypsin-like activity. Plays a major role in the degradation of misfolded proteins.</text>
</comment>
<comment type="catalytic activity">
    <reaction evidence="1">
        <text>Hydrolysis of proteins to small peptides in the presence of ATP and magnesium. alpha-casein is the usual test substrate. In the absence of ATP, only oligopeptides shorter than five residues are hydrolyzed (such as succinyl-Leu-Tyr-|-NHMec, and Leu-Tyr-Leu-|-Tyr-Trp, in which cleavage of the -Tyr-|-Leu- and -Tyr-|-Trp bonds also occurs).</text>
        <dbReference type="EC" id="3.4.21.92"/>
    </reaction>
</comment>
<comment type="subunit">
    <text evidence="1">Fourteen ClpP subunits assemble into 2 heptameric rings which stack back to back to give a disk-like structure with a central cavity, resembling the structure of eukaryotic proteasomes.</text>
</comment>
<comment type="subcellular location">
    <subcellularLocation>
        <location evidence="1">Cytoplasm</location>
    </subcellularLocation>
</comment>
<comment type="similarity">
    <text evidence="1">Belongs to the peptidase S14 family.</text>
</comment>
<sequence length="201" mass="22204">MSGLASLVPMVIEQSSRGERAFDIFSRLLRERIIFINGEINDDVSALVCAQLLSLESDNPDKEISLYINSPGGVVTSGFAIYDTMQYVSCPVSTVCMGFAASMGSFLLMAGTPGRRIALPNATILLHQPLGGFQGQASDIQRHAERIGKTKQRMAELYAQHCGRSYEEVERTLDRDHFMTAREAQTWGIVDHVFDTRKKAA</sequence>
<reference key="1">
    <citation type="journal article" date="2000" name="DNA Res.">
        <title>Complete genome structure of the nitrogen-fixing symbiotic bacterium Mesorhizobium loti.</title>
        <authorList>
            <person name="Kaneko T."/>
            <person name="Nakamura Y."/>
            <person name="Sato S."/>
            <person name="Asamizu E."/>
            <person name="Kato T."/>
            <person name="Sasamoto S."/>
            <person name="Watanabe A."/>
            <person name="Idesawa K."/>
            <person name="Ishikawa A."/>
            <person name="Kawashima K."/>
            <person name="Kimura T."/>
            <person name="Kishida Y."/>
            <person name="Kiyokawa C."/>
            <person name="Kohara M."/>
            <person name="Matsumoto M."/>
            <person name="Matsuno A."/>
            <person name="Mochizuki Y."/>
            <person name="Nakayama S."/>
            <person name="Nakazaki N."/>
            <person name="Shimpo S."/>
            <person name="Sugimoto M."/>
            <person name="Takeuchi C."/>
            <person name="Yamada M."/>
            <person name="Tabata S."/>
        </authorList>
    </citation>
    <scope>NUCLEOTIDE SEQUENCE [LARGE SCALE GENOMIC DNA]</scope>
    <source>
        <strain>LMG 29417 / CECT 9101 / MAFF 303099</strain>
    </source>
</reference>
<organism>
    <name type="scientific">Mesorhizobium japonicum (strain LMG 29417 / CECT 9101 / MAFF 303099)</name>
    <name type="common">Mesorhizobium loti (strain MAFF 303099)</name>
    <dbReference type="NCBI Taxonomy" id="266835"/>
    <lineage>
        <taxon>Bacteria</taxon>
        <taxon>Pseudomonadati</taxon>
        <taxon>Pseudomonadota</taxon>
        <taxon>Alphaproteobacteria</taxon>
        <taxon>Hyphomicrobiales</taxon>
        <taxon>Phyllobacteriaceae</taxon>
        <taxon>Mesorhizobium</taxon>
    </lineage>
</organism>
<protein>
    <recommendedName>
        <fullName evidence="1">ATP-dependent Clp protease proteolytic subunit 1</fullName>
        <ecNumber evidence="1">3.4.21.92</ecNumber>
    </recommendedName>
    <alternativeName>
        <fullName evidence="1">Endopeptidase Clp 1</fullName>
    </alternativeName>
</protein>
<dbReference type="EC" id="3.4.21.92" evidence="1"/>
<dbReference type="EMBL" id="BA000012">
    <property type="protein sequence ID" value="BAB48275.1"/>
    <property type="molecule type" value="Genomic_DNA"/>
</dbReference>
<dbReference type="RefSeq" id="WP_010909630.1">
    <property type="nucleotide sequence ID" value="NC_002678.2"/>
</dbReference>
<dbReference type="SMR" id="Q98M38"/>
<dbReference type="MEROPS" id="S14.001"/>
<dbReference type="KEGG" id="mlo:mlr0748"/>
<dbReference type="eggNOG" id="COG0740">
    <property type="taxonomic scope" value="Bacteria"/>
</dbReference>
<dbReference type="HOGENOM" id="CLU_058707_3_2_5"/>
<dbReference type="Proteomes" id="UP000000552">
    <property type="component" value="Chromosome"/>
</dbReference>
<dbReference type="GO" id="GO:0005737">
    <property type="term" value="C:cytoplasm"/>
    <property type="evidence" value="ECO:0007669"/>
    <property type="project" value="UniProtKB-SubCell"/>
</dbReference>
<dbReference type="GO" id="GO:0009368">
    <property type="term" value="C:endopeptidase Clp complex"/>
    <property type="evidence" value="ECO:0007669"/>
    <property type="project" value="TreeGrafter"/>
</dbReference>
<dbReference type="GO" id="GO:0004176">
    <property type="term" value="F:ATP-dependent peptidase activity"/>
    <property type="evidence" value="ECO:0007669"/>
    <property type="project" value="InterPro"/>
</dbReference>
<dbReference type="GO" id="GO:0051117">
    <property type="term" value="F:ATPase binding"/>
    <property type="evidence" value="ECO:0007669"/>
    <property type="project" value="TreeGrafter"/>
</dbReference>
<dbReference type="GO" id="GO:0004252">
    <property type="term" value="F:serine-type endopeptidase activity"/>
    <property type="evidence" value="ECO:0007669"/>
    <property type="project" value="UniProtKB-UniRule"/>
</dbReference>
<dbReference type="GO" id="GO:0006515">
    <property type="term" value="P:protein quality control for misfolded or incompletely synthesized proteins"/>
    <property type="evidence" value="ECO:0007669"/>
    <property type="project" value="TreeGrafter"/>
</dbReference>
<dbReference type="CDD" id="cd07017">
    <property type="entry name" value="S14_ClpP_2"/>
    <property type="match status" value="1"/>
</dbReference>
<dbReference type="FunFam" id="3.90.226.10:FF:000001">
    <property type="entry name" value="ATP-dependent Clp protease proteolytic subunit"/>
    <property type="match status" value="1"/>
</dbReference>
<dbReference type="Gene3D" id="3.90.226.10">
    <property type="entry name" value="2-enoyl-CoA Hydratase, Chain A, domain 1"/>
    <property type="match status" value="1"/>
</dbReference>
<dbReference type="HAMAP" id="MF_00444">
    <property type="entry name" value="ClpP"/>
    <property type="match status" value="1"/>
</dbReference>
<dbReference type="InterPro" id="IPR001907">
    <property type="entry name" value="ClpP"/>
</dbReference>
<dbReference type="InterPro" id="IPR029045">
    <property type="entry name" value="ClpP/crotonase-like_dom_sf"/>
</dbReference>
<dbReference type="InterPro" id="IPR023562">
    <property type="entry name" value="ClpP/TepA"/>
</dbReference>
<dbReference type="InterPro" id="IPR033135">
    <property type="entry name" value="ClpP_His_AS"/>
</dbReference>
<dbReference type="InterPro" id="IPR018215">
    <property type="entry name" value="ClpP_Ser_AS"/>
</dbReference>
<dbReference type="NCBIfam" id="NF001368">
    <property type="entry name" value="PRK00277.1"/>
    <property type="match status" value="1"/>
</dbReference>
<dbReference type="NCBIfam" id="NF009205">
    <property type="entry name" value="PRK12553.1"/>
    <property type="match status" value="1"/>
</dbReference>
<dbReference type="PANTHER" id="PTHR10381">
    <property type="entry name" value="ATP-DEPENDENT CLP PROTEASE PROTEOLYTIC SUBUNIT"/>
    <property type="match status" value="1"/>
</dbReference>
<dbReference type="PANTHER" id="PTHR10381:SF70">
    <property type="entry name" value="ATP-DEPENDENT CLP PROTEASE PROTEOLYTIC SUBUNIT"/>
    <property type="match status" value="1"/>
</dbReference>
<dbReference type="Pfam" id="PF00574">
    <property type="entry name" value="CLP_protease"/>
    <property type="match status" value="1"/>
</dbReference>
<dbReference type="PRINTS" id="PR00127">
    <property type="entry name" value="CLPPROTEASEP"/>
</dbReference>
<dbReference type="SUPFAM" id="SSF52096">
    <property type="entry name" value="ClpP/crotonase"/>
    <property type="match status" value="1"/>
</dbReference>
<dbReference type="PROSITE" id="PS00382">
    <property type="entry name" value="CLP_PROTEASE_HIS"/>
    <property type="match status" value="1"/>
</dbReference>
<dbReference type="PROSITE" id="PS00381">
    <property type="entry name" value="CLP_PROTEASE_SER"/>
    <property type="match status" value="1"/>
</dbReference>
<feature type="chain" id="PRO_0000179631" description="ATP-dependent Clp protease proteolytic subunit 1">
    <location>
        <begin position="1"/>
        <end position="201"/>
    </location>
</feature>
<feature type="active site" description="Nucleophile" evidence="1">
    <location>
        <position position="102"/>
    </location>
</feature>
<feature type="active site" evidence="1">
    <location>
        <position position="127"/>
    </location>
</feature>
<evidence type="ECO:0000255" key="1">
    <source>
        <dbReference type="HAMAP-Rule" id="MF_00444"/>
    </source>
</evidence>
<name>CLPP1_RHILO</name>
<accession>Q98M38</accession>
<keyword id="KW-0963">Cytoplasm</keyword>
<keyword id="KW-0378">Hydrolase</keyword>
<keyword id="KW-0645">Protease</keyword>
<keyword id="KW-0720">Serine protease</keyword>
<gene>
    <name evidence="1" type="primary">clpP1</name>
    <name type="ordered locus">mlr0748</name>
</gene>
<proteinExistence type="inferred from homology"/>